<sequence>MNARKAPEFPAWPQYDDAERNGLVRALEQGQWWRMGGDEVNSFEREFAAHHGAAHALAVTNGTHALELALQVMGVGPGTEVIVPAFTFISSSQAAQRLGAVTVPVDVDAATYNLDPEAVAAAVTPRTKVIMPVHMAGLMADMDALAKISADTGVPLLQDAAHAHGARWQGKRVGELDSIATFSFQNGKLMTAGEGGAVVFPDGETEKYETAFLRHSCGRPRDDRRYFHKIAGSNMRLNEFSASVLRAQLARLDEQIAVRDERWTLLSRLLGAIDGVVPQGGDVRADRNSHYMAMFRIPGLTEERRNALVDRLVEAGLPAFAAFRAIYRTDAFWELGAPDESVDAIARRCPNTDAISSDCVWLHHRVLLAGEPELHATAEIIADAVARA</sequence>
<gene>
    <name type="primary">rifK</name>
    <name type="synonym">rifD</name>
    <name type="ordered locus">RAM_03205</name>
    <name type="ordered locus">AMES_0625</name>
</gene>
<protein>
    <recommendedName>
        <fullName evidence="5 6">3-amino-5-hydroxybenzoate synthase</fullName>
        <shortName evidence="5 6">AHBA synthase</shortName>
        <ecNumber evidence="3 4">4.2.1.144</ecNumber>
    </recommendedName>
    <alternativeName>
        <fullName evidence="8">Putative UDP-kanosamine synthase aminotransferase subunit</fullName>
        <ecNumber evidence="8">2.6.1.-</ecNumber>
    </alternativeName>
</protein>
<dbReference type="EC" id="4.2.1.144" evidence="3 4"/>
<dbReference type="EC" id="2.6.1.-" evidence="8"/>
<dbReference type="EMBL" id="AF040570">
    <property type="protein sequence ID" value="AAC01720.1"/>
    <property type="molecule type" value="Genomic_DNA"/>
</dbReference>
<dbReference type="EMBL" id="U33061">
    <property type="protein sequence ID" value="AAA75105.1"/>
    <property type="molecule type" value="Genomic_DNA"/>
</dbReference>
<dbReference type="EMBL" id="CP002896">
    <property type="protein sequence ID" value="AEK39133.1"/>
    <property type="molecule type" value="Genomic_DNA"/>
</dbReference>
<dbReference type="EMBL" id="CP003729">
    <property type="protein sequence ID" value="AFO74161.1"/>
    <property type="molecule type" value="Genomic_DNA"/>
</dbReference>
<dbReference type="PIR" id="I39599">
    <property type="entry name" value="I39599"/>
</dbReference>
<dbReference type="RefSeq" id="WP_013222557.1">
    <property type="nucleotide sequence ID" value="NC_018266.1"/>
</dbReference>
<dbReference type="PDB" id="1B9H">
    <property type="method" value="X-ray"/>
    <property type="resolution" value="2.00 A"/>
    <property type="chains" value="A=1-388"/>
</dbReference>
<dbReference type="PDB" id="1B9I">
    <property type="method" value="X-ray"/>
    <property type="resolution" value="2.00 A"/>
    <property type="chains" value="A=1-388"/>
</dbReference>
<dbReference type="PDBsum" id="1B9H"/>
<dbReference type="PDBsum" id="1B9I"/>
<dbReference type="SMR" id="O52552"/>
<dbReference type="STRING" id="713604.RAM_03205"/>
<dbReference type="GeneID" id="92868429"/>
<dbReference type="KEGG" id="amm:AMES_0625"/>
<dbReference type="KEGG" id="amn:RAM_03205"/>
<dbReference type="PATRIC" id="fig|713604.12.peg.666"/>
<dbReference type="HOGENOM" id="CLU_033332_7_1_11"/>
<dbReference type="BioCyc" id="MetaCyc:MONOMER-14078"/>
<dbReference type="BRENDA" id="4.2.1.144">
    <property type="organism ID" value="313"/>
</dbReference>
<dbReference type="UniPathway" id="UPA01029"/>
<dbReference type="EvolutionaryTrace" id="O52552"/>
<dbReference type="Proteomes" id="UP000006138">
    <property type="component" value="Chromosome"/>
</dbReference>
<dbReference type="GO" id="GO:0016829">
    <property type="term" value="F:lyase activity"/>
    <property type="evidence" value="ECO:0007669"/>
    <property type="project" value="UniProtKB-KW"/>
</dbReference>
<dbReference type="GO" id="GO:0030170">
    <property type="term" value="F:pyridoxal phosphate binding"/>
    <property type="evidence" value="ECO:0007669"/>
    <property type="project" value="TreeGrafter"/>
</dbReference>
<dbReference type="GO" id="GO:0008483">
    <property type="term" value="F:transaminase activity"/>
    <property type="evidence" value="ECO:0007669"/>
    <property type="project" value="TreeGrafter"/>
</dbReference>
<dbReference type="GO" id="GO:0017000">
    <property type="term" value="P:antibiotic biosynthetic process"/>
    <property type="evidence" value="ECO:0007669"/>
    <property type="project" value="UniProtKB-KW"/>
</dbReference>
<dbReference type="GO" id="GO:0000271">
    <property type="term" value="P:polysaccharide biosynthetic process"/>
    <property type="evidence" value="ECO:0007669"/>
    <property type="project" value="TreeGrafter"/>
</dbReference>
<dbReference type="CDD" id="cd00616">
    <property type="entry name" value="AHBA_syn"/>
    <property type="match status" value="1"/>
</dbReference>
<dbReference type="Gene3D" id="3.90.1150.10">
    <property type="entry name" value="Aspartate Aminotransferase, domain 1"/>
    <property type="match status" value="1"/>
</dbReference>
<dbReference type="Gene3D" id="3.40.640.10">
    <property type="entry name" value="Type I PLP-dependent aspartate aminotransferase-like (Major domain)"/>
    <property type="match status" value="1"/>
</dbReference>
<dbReference type="InterPro" id="IPR000653">
    <property type="entry name" value="DegT/StrS_aminotransferase"/>
</dbReference>
<dbReference type="InterPro" id="IPR015424">
    <property type="entry name" value="PyrdxlP-dep_Trfase"/>
</dbReference>
<dbReference type="InterPro" id="IPR015421">
    <property type="entry name" value="PyrdxlP-dep_Trfase_major"/>
</dbReference>
<dbReference type="InterPro" id="IPR015422">
    <property type="entry name" value="PyrdxlP-dep_Trfase_small"/>
</dbReference>
<dbReference type="PANTHER" id="PTHR30244:SF34">
    <property type="entry name" value="DTDP-4-AMINO-4,6-DIDEOXYGALACTOSE TRANSAMINASE"/>
    <property type="match status" value="1"/>
</dbReference>
<dbReference type="PANTHER" id="PTHR30244">
    <property type="entry name" value="TRANSAMINASE"/>
    <property type="match status" value="1"/>
</dbReference>
<dbReference type="Pfam" id="PF01041">
    <property type="entry name" value="DegT_DnrJ_EryC1"/>
    <property type="match status" value="1"/>
</dbReference>
<dbReference type="PIRSF" id="PIRSF000390">
    <property type="entry name" value="PLP_StrS"/>
    <property type="match status" value="1"/>
</dbReference>
<dbReference type="SUPFAM" id="SSF53383">
    <property type="entry name" value="PLP-dependent transferases"/>
    <property type="match status" value="1"/>
</dbReference>
<reference key="1">
    <citation type="journal article" date="1998" name="Chem. Biol.">
        <title>Biosynthesis of the ansamycin antibiotic rifamycin: deductions from the molecular analysis of the rif biosynthetic gene cluster of Amycolatopsis mediterranei S699.</title>
        <authorList>
            <person name="August P.R."/>
            <person name="Tang L."/>
            <person name="Yoon Y.J."/>
            <person name="Ning S."/>
            <person name="Mueller R."/>
            <person name="Yu T.W."/>
            <person name="Taylor M."/>
            <person name="Hoffmann D."/>
            <person name="Kim C.G."/>
            <person name="Zhang X."/>
            <person name="Hutchinson C.R."/>
            <person name="Floss H.G."/>
        </authorList>
    </citation>
    <scope>NUCLEOTIDE SEQUENCE [GENOMIC DNA]</scope>
    <source>
        <strain>S699</strain>
    </source>
</reference>
<reference key="2">
    <citation type="journal article" date="1998" name="J. Biol. Chem.">
        <title>3-amino-5-hydroxybenzoic acid synthase, the terminal enzyme in the formation of the precursor of mC7N units in rifamycin and related antibiotics.</title>
        <authorList>
            <person name="Kim C.G."/>
            <person name="Yu T.W."/>
            <person name="Fryhle C.B."/>
            <person name="Handa S."/>
            <person name="Floss H.G."/>
        </authorList>
    </citation>
    <scope>NUCLEOTIDE SEQUENCE [GENOMIC DNA]</scope>
    <scope>PROTEIN SEQUENCE OF 2-11; 74-90 AND 236-261</scope>
    <scope>FUNCTION AS AHBA SYNTHASE</scope>
    <scope>CATALYTIC ACTIVITY</scope>
    <scope>COFACTOR</scope>
    <scope>SUBSTRATE SPECIFICITY</scope>
    <scope>BIOPHYSICOCHEMICAL PROPERTIES</scope>
    <scope>ACTIVITY REGULATION</scope>
    <scope>IDENTIFICATION BY MASS SPECTROMETRY</scope>
    <scope>SUBUNIT</scope>
    <scope>DISRUPTION PHENOTYPE</scope>
    <scope>REACTION MECHANISM</scope>
    <source>
        <strain>S699</strain>
    </source>
</reference>
<reference key="3">
    <citation type="journal article" date="2011" name="J. Bacteriol.">
        <title>Whole genome sequence of the rifamycin B-producing strain Amycolatopsis mediterranei S699.</title>
        <authorList>
            <person name="Verma M."/>
            <person name="Kaur J."/>
            <person name="Kumar M."/>
            <person name="Kumari K."/>
            <person name="Saxena A."/>
            <person name="Anand S."/>
            <person name="Nigam A."/>
            <person name="Ravi V."/>
            <person name="Raghuvanshi S."/>
            <person name="Khurana P."/>
            <person name="Tyagi A.K."/>
            <person name="Khurana J.P."/>
            <person name="Lal R."/>
        </authorList>
    </citation>
    <scope>NUCLEOTIDE SEQUENCE [LARGE SCALE GENOMIC DNA]</scope>
    <source>
        <strain>S699</strain>
    </source>
</reference>
<reference key="4">
    <citation type="journal article" date="2012" name="J. Bacteriol.">
        <title>Complete genome sequence of Amycolatopsis mediterranei S699 based on de novo assembly via a combinatorial sequencing strategy.</title>
        <authorList>
            <person name="Tang B."/>
            <person name="Zhao W."/>
            <person name="Zheng H."/>
            <person name="Zhuo Y."/>
            <person name="Zhang L."/>
            <person name="Zhao G.P."/>
        </authorList>
    </citation>
    <scope>NUCLEOTIDE SEQUENCE [LARGE SCALE GENOMIC DNA]</scope>
    <source>
        <strain>S699</strain>
    </source>
</reference>
<reference key="5">
    <citation type="journal article" date="2001" name="J. Biol. Chem.">
        <title>Mutational analysis and reconstituted expression of the biosynthetic genes involved in the formation of 3-amino-5-hydroxybenzoic acid, the starter unit of rifamycin biosynthesis in amycolatopsis Mediterranei S699.</title>
        <authorList>
            <person name="Yu T.W."/>
            <person name="Muller R."/>
            <person name="Muller M."/>
            <person name="Zhang X."/>
            <person name="Draeger G."/>
            <person name="Kim C.G."/>
            <person name="Leistner E."/>
            <person name="Floss H.G."/>
        </authorList>
    </citation>
    <scope>DISRUPTION PHENOTYPE</scope>
    <source>
        <strain>S699</strain>
    </source>
</reference>
<reference key="6">
    <citation type="journal article" date="2011" name="J. Antibiot.">
        <title>The biosynthesis of 3-amino-5-hydroxybenzoic acid (AHBA), the precursor of mC7N units in ansamycin and mitomycin antibiotics: a review.</title>
        <authorList>
            <person name="Floss H.G."/>
            <person name="Yu T.W."/>
            <person name="Arakawa K."/>
        </authorList>
    </citation>
    <scope>PUTATIVE FUNCTION AS UDP-KANOSAMINE SYNTHASE</scope>
    <scope>CATALYTIC ACTIVITY</scope>
    <scope>INTERACTION WITH RIFL</scope>
    <scope>KINETIC PARAMETERS</scope>
    <scope>PATHWAY</scope>
    <scope>MUTAGENESIS OF PHE-88; ASP-159; HIS-162; GLN-185; LYS-188; ARG-219; TYR-226; ARG-236 AND TYR-291</scope>
    <source>
        <strain>S699</strain>
    </source>
</reference>
<reference key="7">
    <citation type="journal article" date="1999" name="Biochemistry">
        <title>Crystal structure of 3-amino-5-hydroxybenzoic acid (AHBA) synthase.</title>
        <authorList>
            <person name="Eads J.C."/>
            <person name="Beeby M."/>
            <person name="Scapin G."/>
            <person name="Yu T.W."/>
            <person name="Floss H.G."/>
        </authorList>
    </citation>
    <scope>X-RAY CRYSTALLOGRAPHY (2.00 ANGSTROMS) IN COMPLEXES WITH PYRIDOXAL PHOSPHATE AND THE INHIBITOR GABACULINE</scope>
    <scope>COFACTOR</scope>
    <scope>PYRIDOXAL PHOSPHATE AT LYS-188</scope>
    <source>
        <strain>S699</strain>
    </source>
</reference>
<accession>O52552</accession>
<accession>G0FS65</accession>
<accession>Q44095</accession>
<comment type="function">
    <text evidence="3 4">Catalyzes the dehydration and aromatization of 5-amino-5-deoxy-3-dehydroshikimate (aminoDHS) to 3-amino-5-hydroxybenzoate (AHBA), a compound that then serves as the starter unit for the assembly of a polyketide during the biosynthesis of rifamycin B and other ansamycin antibiotics. Cannot utilize 5-deoxy-5-amino-3-dehydroquinate (aminoDHQ), 5-deoxy-5-aminoshikimate (aminoSA), quinate, 3-dehydroquinate, or 3-dehydroshikimate (DHS) as substrate.</text>
</comment>
<comment type="function">
    <text evidence="3">In a complex with RifL, RifK may have a second function in the AHBA pathway, acting as a transaminase introducing the nitrogen into the first pathway intermediate, UDP-3-keto-D-glucose, to give UDP-kanosamine. Appears to use glutamine as the nitrogen donor; NH(4)(+) or asparagine are 30% less effective as nitrogen donors and neither glutamate nor aspartate show activity.</text>
</comment>
<comment type="catalytic activity">
    <reaction evidence="3 4">
        <text>5-deoxy-5-amino-3-dehydroshikimate = 3-amino-5-hydroxybenzoate + H2O + H(+)</text>
        <dbReference type="Rhea" id="RHEA:35771"/>
        <dbReference type="ChEBI" id="CHEBI:15377"/>
        <dbReference type="ChEBI" id="CHEBI:15378"/>
        <dbReference type="ChEBI" id="CHEBI:71959"/>
        <dbReference type="ChEBI" id="CHEBI:71963"/>
        <dbReference type="EC" id="4.2.1.144"/>
    </reaction>
</comment>
<comment type="catalytic activity">
    <reaction evidence="8">
        <text>UDP-3-oxo-alpha-D-glucose + L-glutamine = UDP-alpha-D-kanosamine + 2-oxoglutaramate</text>
        <dbReference type="Rhea" id="RHEA:35775"/>
        <dbReference type="ChEBI" id="CHEBI:16769"/>
        <dbReference type="ChEBI" id="CHEBI:58359"/>
        <dbReference type="ChEBI" id="CHEBI:71964"/>
        <dbReference type="ChEBI" id="CHEBI:71965"/>
    </reaction>
</comment>
<comment type="cofactor">
    <cofactor evidence="1 4">
        <name>pyridoxal 5'-phosphate</name>
        <dbReference type="ChEBI" id="CHEBI:597326"/>
    </cofactor>
    <text evidence="1 4">Binds 1 pyridoxal phosphate per subunit.</text>
</comment>
<comment type="activity regulation">
    <text evidence="4">AHBA synthase activity is activated by 3-deoxy-D-arabinoheptulosonic acid 7-phosphate (DAHP), an intermediate in the shikimate pathway, and is irreversibly inhibited by gabaculine (5-amino-1,3-cyclohexadiene-1-carboxylate).</text>
</comment>
<comment type="biophysicochemical properties">
    <kinetics>
        <KM evidence="4">0.164 mM for 5-amino-5-deoxy-3-dehydroshikimate</KM>
        <KM evidence="3">0.122 mM for 5-amino-5-deoxy-3-dehydroshikimate</KM>
        <text evidence="3">kcat is 6.82 sec(-1) for AHBA synthase activity.</text>
    </kinetics>
    <phDependence>
        <text evidence="4">Optimum pH is 7.5 for AHBA synthase activity. Retains its activity over a broad range of pH. Over 84% of the maximum activity of AHBA synthase is maintained over a pH range from 7.0 to 9.0.</text>
    </phDependence>
    <temperatureDependence>
        <text evidence="4">Optimum temperature is 33 degrees Celsius for AHBA synthase activity. Retains its activity over a broad range of temperature. Over 84% of the maximum activity of AHBA synthase is maintained over a temperature range from 28 to 50 degrees Celsius.</text>
    </temperatureDependence>
</comment>
<comment type="pathway">
    <text evidence="3">Antibiotic biosynthesis; rifamycin B biosynthesis.</text>
</comment>
<comment type="subunit">
    <text evidence="3 4">Homodimer (PubMed:9497318). Can interact with RifL (PubMed:21081954).</text>
</comment>
<comment type="disruption phenotype">
    <text evidence="2 4">Inactivation of the gene encoding AHBA synthase results in loss of rifamycin formation; production of the antibiotic is restored when the mutant is supplemented with AHBA. Cells lacking this gene do not accumulate aminoDHS, aminoDHQ, or their spontaneous aromatization product, protocatechuate.</text>
</comment>
<comment type="miscellaneous">
    <text evidence="9">Mechanistic studies show that the enzyme-bound pyridoxal phosphate forms a Schiff's base with the amino group of 5-amino-5-deoxy-3-dehydroshikimate and catalyzes both an alpha,beta-dehydration and a stereospecific 1,4-enolization of the substrate.</text>
</comment>
<comment type="similarity">
    <text evidence="7">Belongs to the degT/dnrJ/eryC1 family.</text>
</comment>
<evidence type="ECO:0000269" key="1">
    <source>
    </source>
</evidence>
<evidence type="ECO:0000269" key="2">
    <source>
    </source>
</evidence>
<evidence type="ECO:0000269" key="3">
    <source>
    </source>
</evidence>
<evidence type="ECO:0000269" key="4">
    <source>
    </source>
</evidence>
<evidence type="ECO:0000303" key="5">
    <source>
    </source>
</evidence>
<evidence type="ECO:0000303" key="6">
    <source>
    </source>
</evidence>
<evidence type="ECO:0000305" key="7"/>
<evidence type="ECO:0000305" key="8">
    <source>
    </source>
</evidence>
<evidence type="ECO:0000305" key="9">
    <source>
    </source>
</evidence>
<evidence type="ECO:0007829" key="10">
    <source>
        <dbReference type="PDB" id="1B9H"/>
    </source>
</evidence>
<keyword id="KW-0002">3D-structure</keyword>
<keyword id="KW-0045">Antibiotic biosynthesis</keyword>
<keyword id="KW-0903">Direct protein sequencing</keyword>
<keyword id="KW-0456">Lyase</keyword>
<keyword id="KW-0663">Pyridoxal phosphate</keyword>
<keyword id="KW-0808">Transferase</keyword>
<organism>
    <name type="scientific">Amycolatopsis mediterranei (strain S699)</name>
    <name type="common">Nocardia mediterranei</name>
    <dbReference type="NCBI Taxonomy" id="713604"/>
    <lineage>
        <taxon>Bacteria</taxon>
        <taxon>Bacillati</taxon>
        <taxon>Actinomycetota</taxon>
        <taxon>Actinomycetes</taxon>
        <taxon>Pseudonocardiales</taxon>
        <taxon>Pseudonocardiaceae</taxon>
        <taxon>Amycolatopsis</taxon>
    </lineage>
</organism>
<name>RIFK_AMYMS</name>
<feature type="initiator methionine" description="Removed" evidence="4">
    <location>
        <position position="1"/>
    </location>
</feature>
<feature type="chain" id="PRO_0000422400" description="3-amino-5-hydroxybenzoate synthase">
    <location>
        <begin position="2"/>
        <end position="388"/>
    </location>
</feature>
<feature type="modified residue" description="N6-(pyridoxal phosphate)lysine">
    <location>
        <position position="188"/>
    </location>
</feature>
<feature type="mutagenesis site" description="Loss of AHBA synthase activity." evidence="3">
    <original>F</original>
    <variation>A</variation>
    <location>
        <position position="88"/>
    </location>
</feature>
<feature type="mutagenesis site" description="Loss of AHBA synthase activity." evidence="3">
    <original>D</original>
    <variation>A</variation>
    <variation>E</variation>
    <variation>K</variation>
    <location>
        <position position="159"/>
    </location>
</feature>
<feature type="mutagenesis site" description="2-fold decrease in AHBA synthase activity." evidence="3">
    <original>H</original>
    <variation>L</variation>
    <location>
        <position position="162"/>
    </location>
</feature>
<feature type="mutagenesis site" description="Loss of AHBA synthase activity." evidence="3">
    <original>Q</original>
    <variation>E</variation>
    <variation>H</variation>
    <variation>L</variation>
    <location>
        <position position="185"/>
    </location>
</feature>
<feature type="mutagenesis site" description="Loss of AHBA synthase activity." evidence="3">
    <original>K</original>
    <variation>D</variation>
    <location>
        <position position="188"/>
    </location>
</feature>
<feature type="mutagenesis site" description="10-fold decrease in AHBA synthase activity." evidence="3">
    <original>R</original>
    <variation>A</variation>
    <location>
        <position position="219"/>
    </location>
</feature>
<feature type="mutagenesis site" description="Loss of AHBA synthase activity." evidence="3">
    <original>Y</original>
    <variation>F</variation>
    <location>
        <position position="226"/>
    </location>
</feature>
<feature type="mutagenesis site" description="Loss of AHBA synthase activity." evidence="3">
    <original>R</original>
    <variation>A</variation>
    <location>
        <position position="236"/>
    </location>
</feature>
<feature type="mutagenesis site" description="Loss of AHBA synthase activity." evidence="3">
    <original>Y</original>
    <variation>A</variation>
    <location>
        <position position="291"/>
    </location>
</feature>
<feature type="mutagenesis site" description="7-fold decrease in AHBA synthase activity." evidence="3">
    <original>Y</original>
    <variation>F</variation>
    <location>
        <position position="291"/>
    </location>
</feature>
<feature type="sequence conflict" description="In Ref. 2; AAA75105." evidence="7" ref="2">
    <original>A</original>
    <variation>G</variation>
    <location>
        <position position="56"/>
    </location>
</feature>
<feature type="sequence conflict" description="In Ref. 1; AAC01720 and 2; AAA75105." evidence="7" ref="1 2">
    <original>R</original>
    <variation>P</variation>
    <location>
        <position position="262"/>
    </location>
</feature>
<feature type="sequence conflict" description="In Ref. 1; AAC01720 and 2; AAA75105." evidence="7" ref="1 2">
    <original>A</original>
    <variation>G</variation>
    <location>
        <position position="386"/>
    </location>
</feature>
<feature type="helix" evidence="10">
    <location>
        <begin position="17"/>
        <end position="28"/>
    </location>
</feature>
<feature type="turn" evidence="10">
    <location>
        <begin position="34"/>
        <end position="36"/>
    </location>
</feature>
<feature type="helix" evidence="10">
    <location>
        <begin position="39"/>
        <end position="50"/>
    </location>
</feature>
<feature type="strand" evidence="10">
    <location>
        <begin position="54"/>
        <end position="60"/>
    </location>
</feature>
<feature type="helix" evidence="10">
    <location>
        <begin position="62"/>
        <end position="72"/>
    </location>
</feature>
<feature type="strand" evidence="10">
    <location>
        <begin position="80"/>
        <end position="87"/>
    </location>
</feature>
<feature type="helix" evidence="10">
    <location>
        <begin position="90"/>
        <end position="97"/>
    </location>
</feature>
<feature type="strand" evidence="10">
    <location>
        <begin position="101"/>
        <end position="105"/>
    </location>
</feature>
<feature type="turn" evidence="10">
    <location>
        <begin position="109"/>
        <end position="111"/>
    </location>
</feature>
<feature type="helix" evidence="10">
    <location>
        <begin position="116"/>
        <end position="122"/>
    </location>
</feature>
<feature type="strand" evidence="10">
    <location>
        <begin position="127"/>
        <end position="130"/>
    </location>
</feature>
<feature type="helix" evidence="10">
    <location>
        <begin position="135"/>
        <end position="137"/>
    </location>
</feature>
<feature type="helix" evidence="10">
    <location>
        <begin position="142"/>
        <end position="152"/>
    </location>
</feature>
<feature type="helix" evidence="10">
    <location>
        <begin position="173"/>
        <end position="175"/>
    </location>
</feature>
<feature type="strand" evidence="10">
    <location>
        <begin position="176"/>
        <end position="178"/>
    </location>
</feature>
<feature type="strand" evidence="10">
    <location>
        <begin position="180"/>
        <end position="183"/>
    </location>
</feature>
<feature type="strand" evidence="10">
    <location>
        <begin position="188"/>
        <end position="190"/>
    </location>
</feature>
<feature type="strand" evidence="10">
    <location>
        <begin position="192"/>
        <end position="194"/>
    </location>
</feature>
<feature type="strand" evidence="10">
    <location>
        <begin position="196"/>
        <end position="200"/>
    </location>
</feature>
<feature type="helix" evidence="10">
    <location>
        <begin position="205"/>
        <end position="214"/>
    </location>
</feature>
<feature type="helix" evidence="10">
    <location>
        <begin position="239"/>
        <end position="249"/>
    </location>
</feature>
<feature type="helix" evidence="10">
    <location>
        <begin position="252"/>
        <end position="271"/>
    </location>
</feature>
<feature type="strand" evidence="10">
    <location>
        <begin position="291"/>
        <end position="296"/>
    </location>
</feature>
<feature type="helix" evidence="10">
    <location>
        <begin position="302"/>
        <end position="314"/>
    </location>
</feature>
<feature type="strand" evidence="10">
    <location>
        <begin position="319"/>
        <end position="321"/>
    </location>
</feature>
<feature type="helix" evidence="10">
    <location>
        <begin position="326"/>
        <end position="328"/>
    </location>
</feature>
<feature type="helix" evidence="10">
    <location>
        <begin position="330"/>
        <end position="334"/>
    </location>
</feature>
<feature type="helix" evidence="10">
    <location>
        <begin position="342"/>
        <end position="347"/>
    </location>
</feature>
<feature type="helix" evidence="10">
    <location>
        <begin position="350"/>
        <end position="358"/>
    </location>
</feature>
<feature type="strand" evidence="10">
    <location>
        <begin position="359"/>
        <end position="363"/>
    </location>
</feature>
<feature type="helix" evidence="10">
    <location>
        <begin position="364"/>
        <end position="368"/>
    </location>
</feature>
<feature type="helix" evidence="10">
    <location>
        <begin position="371"/>
        <end position="387"/>
    </location>
</feature>
<proteinExistence type="evidence at protein level"/>